<evidence type="ECO:0000255" key="1">
    <source>
        <dbReference type="HAMAP-Rule" id="MF_00011"/>
    </source>
</evidence>
<gene>
    <name evidence="1" type="primary">purA</name>
    <name type="ordered locus">Bind_0262</name>
</gene>
<proteinExistence type="inferred from homology"/>
<protein>
    <recommendedName>
        <fullName evidence="1">Adenylosuccinate synthetase</fullName>
        <shortName evidence="1">AMPSase</shortName>
        <shortName evidence="1">AdSS</shortName>
        <ecNumber evidence="1">6.3.4.4</ecNumber>
    </recommendedName>
    <alternativeName>
        <fullName evidence="1">IMP--aspartate ligase</fullName>
    </alternativeName>
</protein>
<sequence>MANVVVVGAQWGDEGKGKIVDWLSIEADIVVRFQGGHNAGHTLVIGNQVYKLALLPSGIVRLGKLSVIGNGVVVDPQHLVEEIAKLAAQGIEITPDNLKIAENVPLILGLHRELDAHRESSTVEGVKIGTTKRGIGPAYEDKVGRRAIRLMDLAEPDTLDEKIVRLLAHHEPLRRGLGLEPISAGAIRAELESLAPKILPFMDATWDLLENARRAGKRILFEGAQGALLDIDHGTYPFVTSSNTVAANAATGSGLGPKAIGYVLGIAKAYTTRVGGGPFPTELLDETGQLIGDRGHEYGVNTGRRRRCGWFDAVLVRQTVKTCGIDGIALTKLDILDGFKEIKVCVGYDLDGRRIDRLPASQSAQARVKPIYETIDGWEGTTAGARSWADLPAQAIKYVRRIEELIEAPVALLSTSPERADTILVHDPFRD</sequence>
<feature type="chain" id="PRO_1000089269" description="Adenylosuccinate synthetase">
    <location>
        <begin position="1"/>
        <end position="431"/>
    </location>
</feature>
<feature type="active site" description="Proton acceptor" evidence="1">
    <location>
        <position position="13"/>
    </location>
</feature>
<feature type="active site" description="Proton donor" evidence="1">
    <location>
        <position position="41"/>
    </location>
</feature>
<feature type="binding site" evidence="1">
    <location>
        <begin position="12"/>
        <end position="18"/>
    </location>
    <ligand>
        <name>GTP</name>
        <dbReference type="ChEBI" id="CHEBI:37565"/>
    </ligand>
</feature>
<feature type="binding site" description="in other chain" evidence="1">
    <location>
        <begin position="13"/>
        <end position="16"/>
    </location>
    <ligand>
        <name>IMP</name>
        <dbReference type="ChEBI" id="CHEBI:58053"/>
        <note>ligand shared between dimeric partners</note>
    </ligand>
</feature>
<feature type="binding site" evidence="1">
    <location>
        <position position="13"/>
    </location>
    <ligand>
        <name>Mg(2+)</name>
        <dbReference type="ChEBI" id="CHEBI:18420"/>
    </ligand>
</feature>
<feature type="binding site" description="in other chain" evidence="1">
    <location>
        <begin position="38"/>
        <end position="41"/>
    </location>
    <ligand>
        <name>IMP</name>
        <dbReference type="ChEBI" id="CHEBI:58053"/>
        <note>ligand shared between dimeric partners</note>
    </ligand>
</feature>
<feature type="binding site" evidence="1">
    <location>
        <begin position="40"/>
        <end position="42"/>
    </location>
    <ligand>
        <name>GTP</name>
        <dbReference type="ChEBI" id="CHEBI:37565"/>
    </ligand>
</feature>
<feature type="binding site" evidence="1">
    <location>
        <position position="40"/>
    </location>
    <ligand>
        <name>Mg(2+)</name>
        <dbReference type="ChEBI" id="CHEBI:18420"/>
    </ligand>
</feature>
<feature type="binding site" description="in other chain" evidence="1">
    <location>
        <position position="131"/>
    </location>
    <ligand>
        <name>IMP</name>
        <dbReference type="ChEBI" id="CHEBI:58053"/>
        <note>ligand shared between dimeric partners</note>
    </ligand>
</feature>
<feature type="binding site" evidence="1">
    <location>
        <position position="145"/>
    </location>
    <ligand>
        <name>IMP</name>
        <dbReference type="ChEBI" id="CHEBI:58053"/>
        <note>ligand shared between dimeric partners</note>
    </ligand>
</feature>
<feature type="binding site" description="in other chain" evidence="1">
    <location>
        <position position="225"/>
    </location>
    <ligand>
        <name>IMP</name>
        <dbReference type="ChEBI" id="CHEBI:58053"/>
        <note>ligand shared between dimeric partners</note>
    </ligand>
</feature>
<feature type="binding site" description="in other chain" evidence="1">
    <location>
        <position position="240"/>
    </location>
    <ligand>
        <name>IMP</name>
        <dbReference type="ChEBI" id="CHEBI:58053"/>
        <note>ligand shared between dimeric partners</note>
    </ligand>
</feature>
<feature type="binding site" evidence="1">
    <location>
        <begin position="300"/>
        <end position="306"/>
    </location>
    <ligand>
        <name>substrate</name>
    </ligand>
</feature>
<feature type="binding site" description="in other chain" evidence="1">
    <location>
        <position position="304"/>
    </location>
    <ligand>
        <name>IMP</name>
        <dbReference type="ChEBI" id="CHEBI:58053"/>
        <note>ligand shared between dimeric partners</note>
    </ligand>
</feature>
<feature type="binding site" evidence="1">
    <location>
        <position position="306"/>
    </location>
    <ligand>
        <name>GTP</name>
        <dbReference type="ChEBI" id="CHEBI:37565"/>
    </ligand>
</feature>
<feature type="binding site" evidence="1">
    <location>
        <begin position="332"/>
        <end position="334"/>
    </location>
    <ligand>
        <name>GTP</name>
        <dbReference type="ChEBI" id="CHEBI:37565"/>
    </ligand>
</feature>
<feature type="binding site" evidence="1">
    <location>
        <begin position="414"/>
        <end position="416"/>
    </location>
    <ligand>
        <name>GTP</name>
        <dbReference type="ChEBI" id="CHEBI:37565"/>
    </ligand>
</feature>
<reference key="1">
    <citation type="journal article" date="2010" name="J. Bacteriol.">
        <title>Complete genome sequence of Beijerinckia indica subsp. indica.</title>
        <authorList>
            <person name="Tamas I."/>
            <person name="Dedysh S.N."/>
            <person name="Liesack W."/>
            <person name="Stott M.B."/>
            <person name="Alam M."/>
            <person name="Murrell J.C."/>
            <person name="Dunfield P.F."/>
        </authorList>
    </citation>
    <scope>NUCLEOTIDE SEQUENCE [LARGE SCALE GENOMIC DNA]</scope>
    <source>
        <strain>ATCC 9039 / DSM 1715 / NCIMB 8712</strain>
    </source>
</reference>
<accession>B2ICM9</accession>
<organism>
    <name type="scientific">Beijerinckia indica subsp. indica (strain ATCC 9039 / DSM 1715 / NCIMB 8712)</name>
    <dbReference type="NCBI Taxonomy" id="395963"/>
    <lineage>
        <taxon>Bacteria</taxon>
        <taxon>Pseudomonadati</taxon>
        <taxon>Pseudomonadota</taxon>
        <taxon>Alphaproteobacteria</taxon>
        <taxon>Hyphomicrobiales</taxon>
        <taxon>Beijerinckiaceae</taxon>
        <taxon>Beijerinckia</taxon>
    </lineage>
</organism>
<name>PURA_BEII9</name>
<comment type="function">
    <text evidence="1">Plays an important role in the de novo pathway of purine nucleotide biosynthesis. Catalyzes the first committed step in the biosynthesis of AMP from IMP.</text>
</comment>
<comment type="catalytic activity">
    <reaction evidence="1">
        <text>IMP + L-aspartate + GTP = N(6)-(1,2-dicarboxyethyl)-AMP + GDP + phosphate + 2 H(+)</text>
        <dbReference type="Rhea" id="RHEA:15753"/>
        <dbReference type="ChEBI" id="CHEBI:15378"/>
        <dbReference type="ChEBI" id="CHEBI:29991"/>
        <dbReference type="ChEBI" id="CHEBI:37565"/>
        <dbReference type="ChEBI" id="CHEBI:43474"/>
        <dbReference type="ChEBI" id="CHEBI:57567"/>
        <dbReference type="ChEBI" id="CHEBI:58053"/>
        <dbReference type="ChEBI" id="CHEBI:58189"/>
        <dbReference type="EC" id="6.3.4.4"/>
    </reaction>
</comment>
<comment type="cofactor">
    <cofactor evidence="1">
        <name>Mg(2+)</name>
        <dbReference type="ChEBI" id="CHEBI:18420"/>
    </cofactor>
    <text evidence="1">Binds 1 Mg(2+) ion per subunit.</text>
</comment>
<comment type="pathway">
    <text evidence="1">Purine metabolism; AMP biosynthesis via de novo pathway; AMP from IMP: step 1/2.</text>
</comment>
<comment type="subunit">
    <text evidence="1">Homodimer.</text>
</comment>
<comment type="subcellular location">
    <subcellularLocation>
        <location evidence="1">Cytoplasm</location>
    </subcellularLocation>
</comment>
<comment type="similarity">
    <text evidence="1">Belongs to the adenylosuccinate synthetase family.</text>
</comment>
<keyword id="KW-0963">Cytoplasm</keyword>
<keyword id="KW-0342">GTP-binding</keyword>
<keyword id="KW-0436">Ligase</keyword>
<keyword id="KW-0460">Magnesium</keyword>
<keyword id="KW-0479">Metal-binding</keyword>
<keyword id="KW-0547">Nucleotide-binding</keyword>
<keyword id="KW-0658">Purine biosynthesis</keyword>
<keyword id="KW-1185">Reference proteome</keyword>
<dbReference type="EC" id="6.3.4.4" evidence="1"/>
<dbReference type="EMBL" id="CP001016">
    <property type="protein sequence ID" value="ACB93918.1"/>
    <property type="molecule type" value="Genomic_DNA"/>
</dbReference>
<dbReference type="RefSeq" id="WP_012383276.1">
    <property type="nucleotide sequence ID" value="NC_010581.1"/>
</dbReference>
<dbReference type="SMR" id="B2ICM9"/>
<dbReference type="STRING" id="395963.Bind_0262"/>
<dbReference type="KEGG" id="bid:Bind_0262"/>
<dbReference type="eggNOG" id="COG0104">
    <property type="taxonomic scope" value="Bacteria"/>
</dbReference>
<dbReference type="HOGENOM" id="CLU_029848_0_0_5"/>
<dbReference type="OrthoDB" id="9807553at2"/>
<dbReference type="UniPathway" id="UPA00075">
    <property type="reaction ID" value="UER00335"/>
</dbReference>
<dbReference type="Proteomes" id="UP000001695">
    <property type="component" value="Chromosome"/>
</dbReference>
<dbReference type="GO" id="GO:0005737">
    <property type="term" value="C:cytoplasm"/>
    <property type="evidence" value="ECO:0007669"/>
    <property type="project" value="UniProtKB-SubCell"/>
</dbReference>
<dbReference type="GO" id="GO:0004019">
    <property type="term" value="F:adenylosuccinate synthase activity"/>
    <property type="evidence" value="ECO:0007669"/>
    <property type="project" value="UniProtKB-UniRule"/>
</dbReference>
<dbReference type="GO" id="GO:0005525">
    <property type="term" value="F:GTP binding"/>
    <property type="evidence" value="ECO:0007669"/>
    <property type="project" value="UniProtKB-UniRule"/>
</dbReference>
<dbReference type="GO" id="GO:0000287">
    <property type="term" value="F:magnesium ion binding"/>
    <property type="evidence" value="ECO:0007669"/>
    <property type="project" value="UniProtKB-UniRule"/>
</dbReference>
<dbReference type="GO" id="GO:0044208">
    <property type="term" value="P:'de novo' AMP biosynthetic process"/>
    <property type="evidence" value="ECO:0007669"/>
    <property type="project" value="UniProtKB-UniRule"/>
</dbReference>
<dbReference type="GO" id="GO:0046040">
    <property type="term" value="P:IMP metabolic process"/>
    <property type="evidence" value="ECO:0007669"/>
    <property type="project" value="TreeGrafter"/>
</dbReference>
<dbReference type="CDD" id="cd03108">
    <property type="entry name" value="AdSS"/>
    <property type="match status" value="1"/>
</dbReference>
<dbReference type="FunFam" id="3.90.170.10:FF:000001">
    <property type="entry name" value="Adenylosuccinate synthetase"/>
    <property type="match status" value="1"/>
</dbReference>
<dbReference type="Gene3D" id="3.40.440.10">
    <property type="entry name" value="Adenylosuccinate Synthetase, subunit A, domain 1"/>
    <property type="match status" value="1"/>
</dbReference>
<dbReference type="Gene3D" id="1.10.300.10">
    <property type="entry name" value="Adenylosuccinate Synthetase, subunit A, domain 2"/>
    <property type="match status" value="1"/>
</dbReference>
<dbReference type="Gene3D" id="3.90.170.10">
    <property type="entry name" value="Adenylosuccinate Synthetase, subunit A, domain 3"/>
    <property type="match status" value="1"/>
</dbReference>
<dbReference type="HAMAP" id="MF_00011">
    <property type="entry name" value="Adenylosucc_synth"/>
    <property type="match status" value="1"/>
</dbReference>
<dbReference type="InterPro" id="IPR018220">
    <property type="entry name" value="Adenylosuccin_syn_GTP-bd"/>
</dbReference>
<dbReference type="InterPro" id="IPR033128">
    <property type="entry name" value="Adenylosuccin_syn_Lys_AS"/>
</dbReference>
<dbReference type="InterPro" id="IPR042109">
    <property type="entry name" value="Adenylosuccinate_synth_dom1"/>
</dbReference>
<dbReference type="InterPro" id="IPR042110">
    <property type="entry name" value="Adenylosuccinate_synth_dom2"/>
</dbReference>
<dbReference type="InterPro" id="IPR042111">
    <property type="entry name" value="Adenylosuccinate_synth_dom3"/>
</dbReference>
<dbReference type="InterPro" id="IPR001114">
    <property type="entry name" value="Adenylosuccinate_synthetase"/>
</dbReference>
<dbReference type="InterPro" id="IPR027417">
    <property type="entry name" value="P-loop_NTPase"/>
</dbReference>
<dbReference type="NCBIfam" id="NF002223">
    <property type="entry name" value="PRK01117.1"/>
    <property type="match status" value="1"/>
</dbReference>
<dbReference type="NCBIfam" id="TIGR00184">
    <property type="entry name" value="purA"/>
    <property type="match status" value="1"/>
</dbReference>
<dbReference type="PANTHER" id="PTHR11846">
    <property type="entry name" value="ADENYLOSUCCINATE SYNTHETASE"/>
    <property type="match status" value="1"/>
</dbReference>
<dbReference type="PANTHER" id="PTHR11846:SF0">
    <property type="entry name" value="ADENYLOSUCCINATE SYNTHETASE"/>
    <property type="match status" value="1"/>
</dbReference>
<dbReference type="Pfam" id="PF00709">
    <property type="entry name" value="Adenylsucc_synt"/>
    <property type="match status" value="1"/>
</dbReference>
<dbReference type="SMART" id="SM00788">
    <property type="entry name" value="Adenylsucc_synt"/>
    <property type="match status" value="1"/>
</dbReference>
<dbReference type="SUPFAM" id="SSF52540">
    <property type="entry name" value="P-loop containing nucleoside triphosphate hydrolases"/>
    <property type="match status" value="1"/>
</dbReference>
<dbReference type="PROSITE" id="PS01266">
    <property type="entry name" value="ADENYLOSUCCIN_SYN_1"/>
    <property type="match status" value="1"/>
</dbReference>
<dbReference type="PROSITE" id="PS00513">
    <property type="entry name" value="ADENYLOSUCCIN_SYN_2"/>
    <property type="match status" value="1"/>
</dbReference>